<accession>Q94AL9</accession>
<accession>O80911</accession>
<dbReference type="EC" id="2.6.1.44"/>
<dbReference type="EMBL" id="AF166352">
    <property type="protein sequence ID" value="AAD48838.1"/>
    <property type="molecule type" value="mRNA"/>
</dbReference>
<dbReference type="EMBL" id="AC004683">
    <property type="protein sequence ID" value="AAC28764.1"/>
    <property type="molecule type" value="Genomic_DNA"/>
</dbReference>
<dbReference type="EMBL" id="CP002685">
    <property type="protein sequence ID" value="AEC09532.1"/>
    <property type="molecule type" value="Genomic_DNA"/>
</dbReference>
<dbReference type="EMBL" id="AY045941">
    <property type="protein sequence ID" value="AAK76615.1"/>
    <property type="molecule type" value="mRNA"/>
</dbReference>
<dbReference type="EMBL" id="BT001918">
    <property type="protein sequence ID" value="AAN71917.1"/>
    <property type="molecule type" value="mRNA"/>
</dbReference>
<dbReference type="EMBL" id="AY085348">
    <property type="protein sequence ID" value="AAM62579.1"/>
    <property type="molecule type" value="mRNA"/>
</dbReference>
<dbReference type="PIR" id="T02505">
    <property type="entry name" value="T02505"/>
</dbReference>
<dbReference type="RefSeq" id="NP_181374.1">
    <molecule id="Q94AL9-1"/>
    <property type="nucleotide sequence ID" value="NM_129396.4"/>
</dbReference>
<dbReference type="SMR" id="Q94AL9"/>
<dbReference type="BioGRID" id="3763">
    <property type="interactions" value="3"/>
</dbReference>
<dbReference type="FunCoup" id="Q94AL9">
    <property type="interactions" value="540"/>
</dbReference>
<dbReference type="STRING" id="3702.Q94AL9"/>
<dbReference type="PaxDb" id="3702-AT2G38400.2"/>
<dbReference type="ProteomicsDB" id="245032">
    <molecule id="Q94AL9-1"/>
</dbReference>
<dbReference type="EnsemblPlants" id="AT2G38400.1">
    <molecule id="Q94AL9-1"/>
    <property type="protein sequence ID" value="AT2G38400.1"/>
    <property type="gene ID" value="AT2G38400"/>
</dbReference>
<dbReference type="GeneID" id="818421"/>
<dbReference type="Gramene" id="AT2G38400.1">
    <molecule id="Q94AL9-1"/>
    <property type="protein sequence ID" value="AT2G38400.1"/>
    <property type="gene ID" value="AT2G38400"/>
</dbReference>
<dbReference type="KEGG" id="ath:AT2G38400"/>
<dbReference type="Araport" id="AT2G38400"/>
<dbReference type="TAIR" id="AT2G38400">
    <property type="gene designation" value="AGT3"/>
</dbReference>
<dbReference type="eggNOG" id="KOG1404">
    <property type="taxonomic scope" value="Eukaryota"/>
</dbReference>
<dbReference type="HOGENOM" id="CLU_016922_8_0_1"/>
<dbReference type="InParanoid" id="Q94AL9"/>
<dbReference type="OMA" id="HKIPSHY"/>
<dbReference type="OrthoDB" id="10261433at2759"/>
<dbReference type="PhylomeDB" id="Q94AL9"/>
<dbReference type="BioCyc" id="ARA:AT2G38400-MONOMER"/>
<dbReference type="PRO" id="PR:Q94AL9"/>
<dbReference type="Proteomes" id="UP000006548">
    <property type="component" value="Chromosome 2"/>
</dbReference>
<dbReference type="ExpressionAtlas" id="Q94AL9">
    <property type="expression patterns" value="baseline and differential"/>
</dbReference>
<dbReference type="GO" id="GO:0005739">
    <property type="term" value="C:mitochondrion"/>
    <property type="evidence" value="ECO:0007669"/>
    <property type="project" value="UniProtKB-SubCell"/>
</dbReference>
<dbReference type="GO" id="GO:0008453">
    <property type="term" value="F:alanine-glyoxylate transaminase activity"/>
    <property type="evidence" value="ECO:0007669"/>
    <property type="project" value="UniProtKB-EC"/>
</dbReference>
<dbReference type="GO" id="GO:0030170">
    <property type="term" value="F:pyridoxal phosphate binding"/>
    <property type="evidence" value="ECO:0007669"/>
    <property type="project" value="InterPro"/>
</dbReference>
<dbReference type="GO" id="GO:0009853">
    <property type="term" value="P:photorespiration"/>
    <property type="evidence" value="ECO:0007669"/>
    <property type="project" value="UniProtKB-KW"/>
</dbReference>
<dbReference type="CDD" id="cd00610">
    <property type="entry name" value="OAT_like"/>
    <property type="match status" value="1"/>
</dbReference>
<dbReference type="FunFam" id="3.40.640.10:FF:000004">
    <property type="entry name" value="Acetylornithine aminotransferase"/>
    <property type="match status" value="1"/>
</dbReference>
<dbReference type="Gene3D" id="3.90.1150.10">
    <property type="entry name" value="Aspartate Aminotransferase, domain 1"/>
    <property type="match status" value="1"/>
</dbReference>
<dbReference type="Gene3D" id="3.40.640.10">
    <property type="entry name" value="Type I PLP-dependent aspartate aminotransferase-like (Major domain)"/>
    <property type="match status" value="1"/>
</dbReference>
<dbReference type="InterPro" id="IPR005814">
    <property type="entry name" value="Aminotrans_3"/>
</dbReference>
<dbReference type="InterPro" id="IPR049704">
    <property type="entry name" value="Aminotrans_3_PPA_site"/>
</dbReference>
<dbReference type="InterPro" id="IPR015424">
    <property type="entry name" value="PyrdxlP-dep_Trfase"/>
</dbReference>
<dbReference type="InterPro" id="IPR015421">
    <property type="entry name" value="PyrdxlP-dep_Trfase_major"/>
</dbReference>
<dbReference type="InterPro" id="IPR015422">
    <property type="entry name" value="PyrdxlP-dep_Trfase_small"/>
</dbReference>
<dbReference type="PANTHER" id="PTHR45688">
    <property type="match status" value="1"/>
</dbReference>
<dbReference type="PANTHER" id="PTHR45688:SF13">
    <property type="entry name" value="ALANINE--GLYOXYLATE AMINOTRANSFERASE 2-LIKE"/>
    <property type="match status" value="1"/>
</dbReference>
<dbReference type="Pfam" id="PF00202">
    <property type="entry name" value="Aminotran_3"/>
    <property type="match status" value="1"/>
</dbReference>
<dbReference type="PIRSF" id="PIRSF000521">
    <property type="entry name" value="Transaminase_4ab_Lys_Orn"/>
    <property type="match status" value="1"/>
</dbReference>
<dbReference type="SUPFAM" id="SSF53383">
    <property type="entry name" value="PLP-dependent transferases"/>
    <property type="match status" value="1"/>
</dbReference>
<dbReference type="PROSITE" id="PS00600">
    <property type="entry name" value="AA_TRANSFER_CLASS_3"/>
    <property type="match status" value="1"/>
</dbReference>
<name>AGT22_ARATH</name>
<organism>
    <name type="scientific">Arabidopsis thaliana</name>
    <name type="common">Mouse-ear cress</name>
    <dbReference type="NCBI Taxonomy" id="3702"/>
    <lineage>
        <taxon>Eukaryota</taxon>
        <taxon>Viridiplantae</taxon>
        <taxon>Streptophyta</taxon>
        <taxon>Embryophyta</taxon>
        <taxon>Tracheophyta</taxon>
        <taxon>Spermatophyta</taxon>
        <taxon>Magnoliopsida</taxon>
        <taxon>eudicotyledons</taxon>
        <taxon>Gunneridae</taxon>
        <taxon>Pentapetalae</taxon>
        <taxon>rosids</taxon>
        <taxon>malvids</taxon>
        <taxon>Brassicales</taxon>
        <taxon>Brassicaceae</taxon>
        <taxon>Camelineae</taxon>
        <taxon>Arabidopsis</taxon>
    </lineage>
</organism>
<comment type="catalytic activity">
    <reaction>
        <text>glyoxylate + L-alanine = glycine + pyruvate</text>
        <dbReference type="Rhea" id="RHEA:24248"/>
        <dbReference type="ChEBI" id="CHEBI:15361"/>
        <dbReference type="ChEBI" id="CHEBI:36655"/>
        <dbReference type="ChEBI" id="CHEBI:57305"/>
        <dbReference type="ChEBI" id="CHEBI:57972"/>
        <dbReference type="EC" id="2.6.1.44"/>
    </reaction>
</comment>
<comment type="cofactor">
    <cofactor evidence="2">
        <name>pyridoxal 5'-phosphate</name>
        <dbReference type="ChEBI" id="CHEBI:597326"/>
    </cofactor>
</comment>
<comment type="subunit">
    <text evidence="2 3">Homotetramer (By similarity). Interacts with GRF3.</text>
</comment>
<comment type="subcellular location">
    <subcellularLocation>
        <location evidence="6">Mitochondrion</location>
    </subcellularLocation>
</comment>
<comment type="alternative products">
    <event type="alternative splicing"/>
    <isoform>
        <id>Q94AL9-1</id>
        <name>1</name>
        <sequence type="displayed"/>
    </isoform>
    <text>A number of isoforms are produced. According to EST sequences.</text>
</comment>
<comment type="similarity">
    <text evidence="5">Belongs to the class-III pyridoxal-phosphate-dependent aminotransferase family.</text>
</comment>
<evidence type="ECO:0000250" key="1">
    <source>
        <dbReference type="UniProtKB" id="P22256"/>
    </source>
</evidence>
<evidence type="ECO:0000250" key="2">
    <source>
        <dbReference type="UniProtKB" id="Q9APM5"/>
    </source>
</evidence>
<evidence type="ECO:0000269" key="3">
    <source>
    </source>
</evidence>
<evidence type="ECO:0000269" key="4">
    <source>
    </source>
</evidence>
<evidence type="ECO:0000305" key="5"/>
<evidence type="ECO:0000305" key="6">
    <source>
    </source>
</evidence>
<gene>
    <name type="primary">AGT3</name>
    <name type="ordered locus">At2g38400</name>
    <name type="ORF">T19C21.11</name>
</gene>
<protein>
    <recommendedName>
        <fullName>Alanine--glyoxylate aminotransferase 2 homolog 2, mitochondrial</fullName>
        <ecNumber>2.6.1.44</ecNumber>
    </recommendedName>
    <alternativeName>
        <fullName>Beta-alanine-pyruvate aminotransferase 2</fullName>
    </alternativeName>
</protein>
<keyword id="KW-0025">Alternative splicing</keyword>
<keyword id="KW-0032">Aminotransferase</keyword>
<keyword id="KW-0496">Mitochondrion</keyword>
<keyword id="KW-0601">Photorespiration</keyword>
<keyword id="KW-0663">Pyridoxal phosphate</keyword>
<keyword id="KW-1185">Reference proteome</keyword>
<keyword id="KW-0808">Transferase</keyword>
<keyword id="KW-0809">Transit peptide</keyword>
<reference key="1">
    <citation type="journal article" date="2003" name="Plant Physiol.">
        <title>Alanine aminotransferase homologs catalyze the glutamate:glyoxylate aminotransferase reaction in peroxisomes of Arabidopsis.</title>
        <authorList>
            <person name="Liepman A.H."/>
            <person name="Olsen L.J."/>
        </authorList>
    </citation>
    <scope>NUCLEOTIDE SEQUENCE [MRNA]</scope>
    <source>
        <strain>cv. Columbia</strain>
    </source>
</reference>
<reference key="2">
    <citation type="journal article" date="1999" name="Nature">
        <title>Sequence and analysis of chromosome 2 of the plant Arabidopsis thaliana.</title>
        <authorList>
            <person name="Lin X."/>
            <person name="Kaul S."/>
            <person name="Rounsley S.D."/>
            <person name="Shea T.P."/>
            <person name="Benito M.-I."/>
            <person name="Town C.D."/>
            <person name="Fujii C.Y."/>
            <person name="Mason T.M."/>
            <person name="Bowman C.L."/>
            <person name="Barnstead M.E."/>
            <person name="Feldblyum T.V."/>
            <person name="Buell C.R."/>
            <person name="Ketchum K.A."/>
            <person name="Lee J.J."/>
            <person name="Ronning C.M."/>
            <person name="Koo H.L."/>
            <person name="Moffat K.S."/>
            <person name="Cronin L.A."/>
            <person name="Shen M."/>
            <person name="Pai G."/>
            <person name="Van Aken S."/>
            <person name="Umayam L."/>
            <person name="Tallon L.J."/>
            <person name="Gill J.E."/>
            <person name="Adams M.D."/>
            <person name="Carrera A.J."/>
            <person name="Creasy T.H."/>
            <person name="Goodman H.M."/>
            <person name="Somerville C.R."/>
            <person name="Copenhaver G.P."/>
            <person name="Preuss D."/>
            <person name="Nierman W.C."/>
            <person name="White O."/>
            <person name="Eisen J.A."/>
            <person name="Salzberg S.L."/>
            <person name="Fraser C.M."/>
            <person name="Venter J.C."/>
        </authorList>
    </citation>
    <scope>NUCLEOTIDE SEQUENCE [LARGE SCALE GENOMIC DNA]</scope>
    <source>
        <strain>cv. Columbia</strain>
    </source>
</reference>
<reference key="3">
    <citation type="journal article" date="2017" name="Plant J.">
        <title>Araport11: a complete reannotation of the Arabidopsis thaliana reference genome.</title>
        <authorList>
            <person name="Cheng C.Y."/>
            <person name="Krishnakumar V."/>
            <person name="Chan A.P."/>
            <person name="Thibaud-Nissen F."/>
            <person name="Schobel S."/>
            <person name="Town C.D."/>
        </authorList>
    </citation>
    <scope>GENOME REANNOTATION</scope>
    <source>
        <strain>cv. Columbia</strain>
    </source>
</reference>
<reference key="4">
    <citation type="journal article" date="2003" name="Science">
        <title>Empirical analysis of transcriptional activity in the Arabidopsis genome.</title>
        <authorList>
            <person name="Yamada K."/>
            <person name="Lim J."/>
            <person name="Dale J.M."/>
            <person name="Chen H."/>
            <person name="Shinn P."/>
            <person name="Palm C.J."/>
            <person name="Southwick A.M."/>
            <person name="Wu H.C."/>
            <person name="Kim C.J."/>
            <person name="Nguyen M."/>
            <person name="Pham P.K."/>
            <person name="Cheuk R.F."/>
            <person name="Karlin-Newmann G."/>
            <person name="Liu S.X."/>
            <person name="Lam B."/>
            <person name="Sakano H."/>
            <person name="Wu T."/>
            <person name="Yu G."/>
            <person name="Miranda M."/>
            <person name="Quach H.L."/>
            <person name="Tripp M."/>
            <person name="Chang C.H."/>
            <person name="Lee J.M."/>
            <person name="Toriumi M.J."/>
            <person name="Chan M.M."/>
            <person name="Tang C.C."/>
            <person name="Onodera C.S."/>
            <person name="Deng J.M."/>
            <person name="Akiyama K."/>
            <person name="Ansari Y."/>
            <person name="Arakawa T."/>
            <person name="Banh J."/>
            <person name="Banno F."/>
            <person name="Bowser L."/>
            <person name="Brooks S.Y."/>
            <person name="Carninci P."/>
            <person name="Chao Q."/>
            <person name="Choy N."/>
            <person name="Enju A."/>
            <person name="Goldsmith A.D."/>
            <person name="Gurjal M."/>
            <person name="Hansen N.F."/>
            <person name="Hayashizaki Y."/>
            <person name="Johnson-Hopson C."/>
            <person name="Hsuan V.W."/>
            <person name="Iida K."/>
            <person name="Karnes M."/>
            <person name="Khan S."/>
            <person name="Koesema E."/>
            <person name="Ishida J."/>
            <person name="Jiang P.X."/>
            <person name="Jones T."/>
            <person name="Kawai J."/>
            <person name="Kamiya A."/>
            <person name="Meyers C."/>
            <person name="Nakajima M."/>
            <person name="Narusaka M."/>
            <person name="Seki M."/>
            <person name="Sakurai T."/>
            <person name="Satou M."/>
            <person name="Tamse R."/>
            <person name="Vaysberg M."/>
            <person name="Wallender E.K."/>
            <person name="Wong C."/>
            <person name="Yamamura Y."/>
            <person name="Yuan S."/>
            <person name="Shinozaki K."/>
            <person name="Davis R.W."/>
            <person name="Theologis A."/>
            <person name="Ecker J.R."/>
        </authorList>
    </citation>
    <scope>NUCLEOTIDE SEQUENCE [LARGE SCALE MRNA]</scope>
    <source>
        <strain>cv. Columbia</strain>
    </source>
</reference>
<reference key="5">
    <citation type="submission" date="2002-03" db="EMBL/GenBank/DDBJ databases">
        <title>Full-length cDNA from Arabidopsis thaliana.</title>
        <authorList>
            <person name="Brover V.V."/>
            <person name="Troukhan M.E."/>
            <person name="Alexandrov N.A."/>
            <person name="Lu Y.-P."/>
            <person name="Flavell R.B."/>
            <person name="Feldmann K.A."/>
        </authorList>
    </citation>
    <scope>NUCLEOTIDE SEQUENCE [LARGE SCALE MRNA]</scope>
</reference>
<reference key="6">
    <citation type="journal article" date="2011" name="FEBS Lett.">
        <title>14-3-3 proteins fine-tune plant nutrient metabolism.</title>
        <authorList>
            <person name="Shin R."/>
            <person name="Jez J.M."/>
            <person name="Basra A."/>
            <person name="Zhang B."/>
            <person name="Schachtman D.P."/>
        </authorList>
    </citation>
    <scope>INTERACTION WITH GRF3</scope>
</reference>
<reference key="7">
    <citation type="journal article" date="2015" name="J. Exp. Bot.">
        <title>Identification of cleavage sites and substrate proteins for two mitochondrial intermediate peptidases in Arabidopsis thaliana.</title>
        <authorList>
            <person name="Carrie C."/>
            <person name="Venne A.S."/>
            <person name="Zahedi R.P."/>
            <person name="Soll J."/>
        </authorList>
    </citation>
    <scope>IDENTIFICATION BY MASS SPECTROMETRY</scope>
    <scope>CLEAVAGE OF TRANSIT PEPTIDE AFTER ILE-22</scope>
</reference>
<sequence length="477" mass="51912">MQRFAAKRSVQNISVSLWRRCISSTSQAATASVKDSDEFQARLPPFAYTPPPYTGPSADVILSKRKEFLSPSMFCLYRKPLNIVDGKMQYLFDESGRRYLDAFAGIAVVNCGHCHPDVVEPVINQIKRLQHPTVLYLNHAIADFSEALASKLPGDLKVVFFTNSGTEANELALMMAKLYTGCQDIVAVRNGYHGNAAATMGATGQSMWKFNVVQNSVHHALNPDPYRGVFGSDGEKYAKDLQDLIQYGTTGHIAGFICEAIQGVGGIVELAPGYLSAAYDTVKKAGGLFIADEVQSGFARTGNFWGFEAHNVVPDIVTMAKGIGNGFPLGAVVTTPEIAGVLTRRSYFNTFGGNSVSTTAGLAVLNVIEKEKLQENAAMVGSYLKEKLTQLKEKHEIIGDVRGRGLMLGVELVSDRKLKTPATAETLHIMDQMKELGVLIGKGGYFGNVFRITPPLCFTKDDADFLVEAMDYSMSKM</sequence>
<feature type="transit peptide" description="Mitochondrion" evidence="4">
    <location>
        <begin position="1"/>
        <end position="22"/>
    </location>
</feature>
<feature type="chain" id="PRO_0000041946" description="Alanine--glyoxylate aminotransferase 2 homolog 2, mitochondrial">
    <location>
        <begin position="23"/>
        <end position="477"/>
    </location>
</feature>
<feature type="binding site" evidence="1">
    <location>
        <begin position="165"/>
        <end position="166"/>
    </location>
    <ligand>
        <name>pyridoxal 5'-phosphate</name>
        <dbReference type="ChEBI" id="CHEBI:597326"/>
    </ligand>
</feature>
<feature type="binding site" evidence="1">
    <location>
        <position position="192"/>
    </location>
    <ligand>
        <name>pyridoxal 5'-phosphate</name>
        <dbReference type="ChEBI" id="CHEBI:597326"/>
    </ligand>
</feature>
<feature type="binding site" evidence="1">
    <location>
        <begin position="292"/>
        <end position="295"/>
    </location>
    <ligand>
        <name>pyridoxal 5'-phosphate</name>
        <dbReference type="ChEBI" id="CHEBI:597326"/>
    </ligand>
</feature>
<feature type="binding site" evidence="1">
    <location>
        <position position="350"/>
    </location>
    <ligand>
        <name>pyridoxal 5'-phosphate</name>
        <dbReference type="ChEBI" id="CHEBI:597326"/>
    </ligand>
</feature>
<feature type="modified residue" description="N6-(pyridoxal phosphate)lysine" evidence="1">
    <location>
        <position position="321"/>
    </location>
</feature>
<feature type="sequence conflict" description="In Ref. 4; AAK76615." evidence="5" ref="4">
    <original>D</original>
    <variation>G</variation>
    <location>
        <position position="461"/>
    </location>
</feature>
<proteinExistence type="evidence at protein level"/>